<protein>
    <recommendedName>
        <fullName>Gap junction beta-5 protein</fullName>
    </recommendedName>
    <alternativeName>
        <fullName>Connexin-31.1</fullName>
        <shortName>Cx31.1</shortName>
    </alternativeName>
</protein>
<evidence type="ECO:0000255" key="1"/>
<evidence type="ECO:0000256" key="2">
    <source>
        <dbReference type="SAM" id="MobiDB-lite"/>
    </source>
</evidence>
<evidence type="ECO:0000305" key="3"/>
<sequence>MNWSVFEGLLSGVNKYSTAFGRIWLSLVFVFRVLVYLVTAERVWGDDQKDFDCNTRQPGCTNVCYDEFFPVSHVRLWALQLILVTCPSLLVVMHVAYRKAREKKYQQEVGKGYLYPNPGKKRGGLWWTYVCSLLFKATIDIIFLYLFHAFYPRYTLPSMVKCHSAPCPNTVDCFIAKPSEKNIFIVFMLVTAIVCILLNLVELLYLVIKRCSECAPAKRPPTAHAKNDPNWANPSSKEKDFLSSDLIFLGSDTHPPLLPDRPRAHVKKTIL</sequence>
<accession>P28232</accession>
<dbReference type="EMBL" id="M76533">
    <property type="protein sequence ID" value="AAB38538.1"/>
    <property type="molecule type" value="Genomic_DNA"/>
</dbReference>
<dbReference type="PIR" id="D42053">
    <property type="entry name" value="D42053"/>
</dbReference>
<dbReference type="RefSeq" id="NP_062114.1">
    <property type="nucleotide sequence ID" value="NM_019241.2"/>
</dbReference>
<dbReference type="RefSeq" id="XP_008762212.1">
    <property type="nucleotide sequence ID" value="XM_008763990.1"/>
</dbReference>
<dbReference type="RefSeq" id="XP_017448696.1">
    <property type="nucleotide sequence ID" value="XM_017593207.1"/>
</dbReference>
<dbReference type="SMR" id="P28232"/>
<dbReference type="FunCoup" id="P28232">
    <property type="interactions" value="21"/>
</dbReference>
<dbReference type="STRING" id="10116.ENSRNOP00000075127"/>
<dbReference type="PhosphoSitePlus" id="P28232"/>
<dbReference type="PaxDb" id="10116-ENSRNOP00000019315"/>
<dbReference type="Ensembl" id="ENSRNOT00000081919.2">
    <property type="protein sequence ID" value="ENSRNOP00000075127.1"/>
    <property type="gene ID" value="ENSRNOG00000059897.2"/>
</dbReference>
<dbReference type="GeneID" id="29586"/>
<dbReference type="KEGG" id="rno:29586"/>
<dbReference type="UCSC" id="RGD:2696">
    <property type="organism name" value="rat"/>
</dbReference>
<dbReference type="AGR" id="RGD:2696"/>
<dbReference type="CTD" id="2709"/>
<dbReference type="RGD" id="2696">
    <property type="gene designation" value="Gjb5"/>
</dbReference>
<dbReference type="eggNOG" id="ENOG502R3YE">
    <property type="taxonomic scope" value="Eukaryota"/>
</dbReference>
<dbReference type="GeneTree" id="ENSGT01030000234513"/>
<dbReference type="HOGENOM" id="CLU_037388_4_1_1"/>
<dbReference type="InParanoid" id="P28232"/>
<dbReference type="OMA" id="SQYRRTD"/>
<dbReference type="OrthoDB" id="9441654at2759"/>
<dbReference type="PhylomeDB" id="P28232"/>
<dbReference type="TreeFam" id="TF329606"/>
<dbReference type="Reactome" id="R-RNO-190861">
    <property type="pathway name" value="Gap junction assembly"/>
</dbReference>
<dbReference type="PRO" id="PR:P28232"/>
<dbReference type="Proteomes" id="UP000002494">
    <property type="component" value="Chromosome 5"/>
</dbReference>
<dbReference type="Bgee" id="ENSRNOG00000059897">
    <property type="expression patterns" value="Expressed in esophagus and 11 other cell types or tissues"/>
</dbReference>
<dbReference type="GO" id="GO:0005922">
    <property type="term" value="C:connexin complex"/>
    <property type="evidence" value="ECO:0000318"/>
    <property type="project" value="GO_Central"/>
</dbReference>
<dbReference type="GO" id="GO:0005243">
    <property type="term" value="F:gap junction channel activity"/>
    <property type="evidence" value="ECO:0000318"/>
    <property type="project" value="GO_Central"/>
</dbReference>
<dbReference type="GO" id="GO:0007267">
    <property type="term" value="P:cell-cell signaling"/>
    <property type="evidence" value="ECO:0000318"/>
    <property type="project" value="GO_Central"/>
</dbReference>
<dbReference type="GO" id="GO:1905867">
    <property type="term" value="P:epididymis development"/>
    <property type="evidence" value="ECO:0000270"/>
    <property type="project" value="RGD"/>
</dbReference>
<dbReference type="GO" id="GO:0060713">
    <property type="term" value="P:labyrinthine layer morphogenesis"/>
    <property type="evidence" value="ECO:0000266"/>
    <property type="project" value="RGD"/>
</dbReference>
<dbReference type="GO" id="GO:0060708">
    <property type="term" value="P:spongiotrophoblast differentiation"/>
    <property type="evidence" value="ECO:0000266"/>
    <property type="project" value="RGD"/>
</dbReference>
<dbReference type="GO" id="GO:0060707">
    <property type="term" value="P:trophoblast giant cell differentiation"/>
    <property type="evidence" value="ECO:0000266"/>
    <property type="project" value="RGD"/>
</dbReference>
<dbReference type="FunFam" id="1.20.1440.80:FF:000001">
    <property type="entry name" value="Gap junction alpha-1"/>
    <property type="match status" value="1"/>
</dbReference>
<dbReference type="Gene3D" id="1.20.1440.80">
    <property type="entry name" value="Gap junction channel protein cysteine-rich domain"/>
    <property type="match status" value="1"/>
</dbReference>
<dbReference type="InterPro" id="IPR000500">
    <property type="entry name" value="Connexin"/>
</dbReference>
<dbReference type="InterPro" id="IPR002271">
    <property type="entry name" value="Connexin311"/>
</dbReference>
<dbReference type="InterPro" id="IPR019570">
    <property type="entry name" value="Connexin_CCC"/>
</dbReference>
<dbReference type="InterPro" id="IPR017990">
    <property type="entry name" value="Connexin_CS"/>
</dbReference>
<dbReference type="InterPro" id="IPR013092">
    <property type="entry name" value="Connexin_N"/>
</dbReference>
<dbReference type="InterPro" id="IPR038359">
    <property type="entry name" value="Connexin_N_sf"/>
</dbReference>
<dbReference type="PANTHER" id="PTHR11984">
    <property type="entry name" value="CONNEXIN"/>
    <property type="match status" value="1"/>
</dbReference>
<dbReference type="PANTHER" id="PTHR11984:SF29">
    <property type="entry name" value="GAP JUNCTION BETA-5 PROTEIN"/>
    <property type="match status" value="1"/>
</dbReference>
<dbReference type="Pfam" id="PF00029">
    <property type="entry name" value="Connexin"/>
    <property type="match status" value="1"/>
</dbReference>
<dbReference type="PRINTS" id="PR00206">
    <property type="entry name" value="CONNEXIN"/>
</dbReference>
<dbReference type="PRINTS" id="PR01141">
    <property type="entry name" value="CONNEXINB4"/>
</dbReference>
<dbReference type="SMART" id="SM00037">
    <property type="entry name" value="CNX"/>
    <property type="match status" value="1"/>
</dbReference>
<dbReference type="SMART" id="SM01089">
    <property type="entry name" value="Connexin_CCC"/>
    <property type="match status" value="1"/>
</dbReference>
<dbReference type="PROSITE" id="PS00407">
    <property type="entry name" value="CONNEXINS_1"/>
    <property type="match status" value="1"/>
</dbReference>
<dbReference type="PROSITE" id="PS00408">
    <property type="entry name" value="CONNEXINS_2"/>
    <property type="match status" value="1"/>
</dbReference>
<gene>
    <name type="primary">Gjb5</name>
    <name type="synonym">Cxn-31.1</name>
</gene>
<reference key="1">
    <citation type="journal article" date="1992" name="J. Biol. Chem.">
        <title>Four novel members of the connexin family of gap junction proteins. Molecular cloning, expression, and chromosome mapping.</title>
        <authorList>
            <person name="Haefliger J.-A."/>
            <person name="Bruzzone R."/>
            <person name="Jenkins N.A."/>
            <person name="Gilbert D.J."/>
            <person name="Copeland N.G."/>
            <person name="Paul D.L."/>
        </authorList>
    </citation>
    <scope>NUCLEOTIDE SEQUENCE [GENOMIC DNA]</scope>
</reference>
<keyword id="KW-0965">Cell junction</keyword>
<keyword id="KW-1003">Cell membrane</keyword>
<keyword id="KW-0303">Gap junction</keyword>
<keyword id="KW-0472">Membrane</keyword>
<keyword id="KW-1185">Reference proteome</keyword>
<keyword id="KW-0812">Transmembrane</keyword>
<keyword id="KW-1133">Transmembrane helix</keyword>
<feature type="chain" id="PRO_0000057870" description="Gap junction beta-5 protein">
    <location>
        <begin position="1"/>
        <end position="271"/>
    </location>
</feature>
<feature type="topological domain" description="Cytoplasmic" evidence="1">
    <location>
        <begin position="1"/>
        <end position="20"/>
    </location>
</feature>
<feature type="transmembrane region" description="Helical" evidence="1">
    <location>
        <begin position="21"/>
        <end position="40"/>
    </location>
</feature>
<feature type="topological domain" description="Extracellular" evidence="1">
    <location>
        <begin position="41"/>
        <end position="75"/>
    </location>
</feature>
<feature type="transmembrane region" description="Helical" evidence="1">
    <location>
        <begin position="76"/>
        <end position="98"/>
    </location>
</feature>
<feature type="topological domain" description="Cytoplasmic" evidence="1">
    <location>
        <begin position="99"/>
        <end position="124"/>
    </location>
</feature>
<feature type="transmembrane region" description="Helical" evidence="1">
    <location>
        <begin position="125"/>
        <end position="147"/>
    </location>
</feature>
<feature type="topological domain" description="Extracellular" evidence="1">
    <location>
        <begin position="148"/>
        <end position="182"/>
    </location>
</feature>
<feature type="transmembrane region" description="Helical" evidence="1">
    <location>
        <begin position="183"/>
        <end position="205"/>
    </location>
</feature>
<feature type="topological domain" description="Cytoplasmic" evidence="1">
    <location>
        <begin position="206"/>
        <end position="271"/>
    </location>
</feature>
<feature type="region of interest" description="Disordered" evidence="2">
    <location>
        <begin position="217"/>
        <end position="237"/>
    </location>
</feature>
<proteinExistence type="evidence at transcript level"/>
<organism>
    <name type="scientific">Rattus norvegicus</name>
    <name type="common">Rat</name>
    <dbReference type="NCBI Taxonomy" id="10116"/>
    <lineage>
        <taxon>Eukaryota</taxon>
        <taxon>Metazoa</taxon>
        <taxon>Chordata</taxon>
        <taxon>Craniata</taxon>
        <taxon>Vertebrata</taxon>
        <taxon>Euteleostomi</taxon>
        <taxon>Mammalia</taxon>
        <taxon>Eutheria</taxon>
        <taxon>Euarchontoglires</taxon>
        <taxon>Glires</taxon>
        <taxon>Rodentia</taxon>
        <taxon>Myomorpha</taxon>
        <taxon>Muroidea</taxon>
        <taxon>Muridae</taxon>
        <taxon>Murinae</taxon>
        <taxon>Rattus</taxon>
    </lineage>
</organism>
<name>CXB5_RAT</name>
<comment type="function">
    <text>One gap junction consists of a cluster of closely packed pairs of transmembrane channels, the connexons, through which materials of low MW diffuse from one cell to a neighboring cell.</text>
</comment>
<comment type="subunit">
    <text>A connexon is composed of a hexamer of connexins.</text>
</comment>
<comment type="subcellular location">
    <subcellularLocation>
        <location>Cell membrane</location>
        <topology>Multi-pass membrane protein</topology>
    </subcellularLocation>
    <subcellularLocation>
        <location>Cell junction</location>
        <location>Gap junction</location>
    </subcellularLocation>
</comment>
<comment type="tissue specificity">
    <text>Expressed in skin.</text>
</comment>
<comment type="similarity">
    <text evidence="3">Belongs to the connexin family. Beta-type (group I) subfamily.</text>
</comment>